<dbReference type="EMBL" id="Z73102">
    <property type="protein sequence ID" value="CAA97410.1"/>
    <property type="molecule type" value="Genomic_DNA"/>
</dbReference>
<dbReference type="EMBL" id="AF292051">
    <property type="protein sequence ID" value="AAG41147.1"/>
    <property type="molecule type" value="mRNA"/>
</dbReference>
<dbReference type="PIR" id="T18655">
    <property type="entry name" value="T18655"/>
</dbReference>
<dbReference type="RefSeq" id="NP_502128.1">
    <property type="nucleotide sequence ID" value="NM_069727.7"/>
</dbReference>
<dbReference type="SMR" id="Q17435"/>
<dbReference type="BioGRID" id="43144">
    <property type="interactions" value="8"/>
</dbReference>
<dbReference type="FunCoup" id="Q17435">
    <property type="interactions" value="2659"/>
</dbReference>
<dbReference type="STRING" id="6239.B0035.4.2"/>
<dbReference type="PaxDb" id="6239-B0035.4"/>
<dbReference type="PeptideAtlas" id="Q17435"/>
<dbReference type="EnsemblMetazoa" id="B0035.4.1">
    <property type="protein sequence ID" value="B0035.4.1"/>
    <property type="gene ID" value="WBGene00007107"/>
</dbReference>
<dbReference type="GeneID" id="178045"/>
<dbReference type="KEGG" id="cel:CELE_B0035.4"/>
<dbReference type="AGR" id="WB:WBGene00007107"/>
<dbReference type="CTD" id="178045"/>
<dbReference type="WormBase" id="B0035.4">
    <property type="protein sequence ID" value="CE05162"/>
    <property type="gene ID" value="WBGene00007107"/>
    <property type="gene designation" value="pfd-4"/>
</dbReference>
<dbReference type="eggNOG" id="KOG1760">
    <property type="taxonomic scope" value="Eukaryota"/>
</dbReference>
<dbReference type="GeneTree" id="ENSGT00390000006696"/>
<dbReference type="HOGENOM" id="CLU_130032_0_0_1"/>
<dbReference type="InParanoid" id="Q17435"/>
<dbReference type="OMA" id="KFGRAIN"/>
<dbReference type="OrthoDB" id="10250441at2759"/>
<dbReference type="PhylomeDB" id="Q17435"/>
<dbReference type="PRO" id="PR:Q17435"/>
<dbReference type="Proteomes" id="UP000001940">
    <property type="component" value="Chromosome IV"/>
</dbReference>
<dbReference type="Bgee" id="WBGene00007107">
    <property type="expression patterns" value="Expressed in embryo and 3 other cell types or tissues"/>
</dbReference>
<dbReference type="GO" id="GO:0005737">
    <property type="term" value="C:cytoplasm"/>
    <property type="evidence" value="ECO:0000318"/>
    <property type="project" value="GO_Central"/>
</dbReference>
<dbReference type="GO" id="GO:0016272">
    <property type="term" value="C:prefoldin complex"/>
    <property type="evidence" value="ECO:0000318"/>
    <property type="project" value="GO_Central"/>
</dbReference>
<dbReference type="GO" id="GO:0051082">
    <property type="term" value="F:unfolded protein binding"/>
    <property type="evidence" value="ECO:0000318"/>
    <property type="project" value="GO_Central"/>
</dbReference>
<dbReference type="GO" id="GO:0006457">
    <property type="term" value="P:protein folding"/>
    <property type="evidence" value="ECO:0000318"/>
    <property type="project" value="GO_Central"/>
</dbReference>
<dbReference type="CDD" id="cd23165">
    <property type="entry name" value="Prefoldin_4"/>
    <property type="match status" value="1"/>
</dbReference>
<dbReference type="InterPro" id="IPR002777">
    <property type="entry name" value="PFD_beta-like"/>
</dbReference>
<dbReference type="InterPro" id="IPR016661">
    <property type="entry name" value="PFDN4"/>
</dbReference>
<dbReference type="PANTHER" id="PTHR21100">
    <property type="entry name" value="PREFOLDIN SUBUNIT 4"/>
    <property type="match status" value="1"/>
</dbReference>
<dbReference type="PANTHER" id="PTHR21100:SF9">
    <property type="entry name" value="PREFOLDIN SUBUNIT 4"/>
    <property type="match status" value="1"/>
</dbReference>
<dbReference type="Pfam" id="PF01920">
    <property type="entry name" value="Prefoldin_2"/>
    <property type="match status" value="1"/>
</dbReference>
<dbReference type="PIRSF" id="PIRSF016477">
    <property type="entry name" value="Prefoldin_subunit_4"/>
    <property type="match status" value="1"/>
</dbReference>
<dbReference type="SUPFAM" id="SSF46579">
    <property type="entry name" value="Prefoldin"/>
    <property type="match status" value="1"/>
</dbReference>
<name>PFD4_CAEEL</name>
<proteinExistence type="evidence at transcript level"/>
<organism>
    <name type="scientific">Caenorhabditis elegans</name>
    <dbReference type="NCBI Taxonomy" id="6239"/>
    <lineage>
        <taxon>Eukaryota</taxon>
        <taxon>Metazoa</taxon>
        <taxon>Ecdysozoa</taxon>
        <taxon>Nematoda</taxon>
        <taxon>Chromadorea</taxon>
        <taxon>Rhabditida</taxon>
        <taxon>Rhabditina</taxon>
        <taxon>Rhabditomorpha</taxon>
        <taxon>Rhabditoidea</taxon>
        <taxon>Rhabditidae</taxon>
        <taxon>Peloderinae</taxon>
        <taxon>Caenorhabditis</taxon>
    </lineage>
</organism>
<gene>
    <name type="primary">pfd-4</name>
    <name type="synonym">tag-317</name>
    <name type="ORF">B0035.4</name>
</gene>
<keyword id="KW-0143">Chaperone</keyword>
<keyword id="KW-1185">Reference proteome</keyword>
<comment type="function">
    <text evidence="1">Binds specifically to cytosolic chaperonin (c-CPN) and transfers target proteins to it. Binds to nascent polypeptide chain and promotes folding in an environment in which there are many competing pathways for nonnative proteins (By similarity).</text>
</comment>
<comment type="subunit">
    <text evidence="1">Heterohexamer of two PFD-alpha type and four PFD-beta type subunits.</text>
</comment>
<comment type="similarity">
    <text evidence="2">Belongs to the prefoldin subunit beta family.</text>
</comment>
<reference key="1">
    <citation type="journal article" date="1998" name="Science">
        <title>Genome sequence of the nematode C. elegans: a platform for investigating biology.</title>
        <authorList>
            <consortium name="The C. elegans sequencing consortium"/>
        </authorList>
    </citation>
    <scope>NUCLEOTIDE SEQUENCE [LARGE SCALE GENOMIC DNA]</scope>
    <source>
        <strain>Bristol N2</strain>
    </source>
</reference>
<reference key="2">
    <citation type="submission" date="2000-08" db="EMBL/GenBank/DDBJ databases">
        <title>The Caenorhabditis elegans transcriptome project, a complementary view of the genome.</title>
        <authorList>
            <person name="Kohara Y."/>
            <person name="Shin-i T."/>
            <person name="Suzuki Y."/>
            <person name="Sugano S."/>
            <person name="Potdevin M."/>
            <person name="Thierry-Mieg Y."/>
            <person name="Thierry-Mieg D."/>
            <person name="Thierry-Mieg J."/>
        </authorList>
    </citation>
    <scope>NUCLEOTIDE SEQUENCE [LARGE SCALE MRNA]</scope>
    <source>
        <strain>Bristol N2</strain>
    </source>
</reference>
<protein>
    <recommendedName>
        <fullName>Probable prefoldin subunit 4</fullName>
    </recommendedName>
</protein>
<sequence length="126" mass="14032">MPEHTKVSAEDQALLNKFARSYQTQTQLKADVKEAKTLIDNINEASDEILLLDDEDSASIPCRIGSCFVHFNGDSLNEHLEGKKTTAEKVLSEKTSELDAISADMEQIKKVLYAKFGDQINLDAEE</sequence>
<evidence type="ECO:0000250" key="1"/>
<evidence type="ECO:0000305" key="2"/>
<accession>Q17435</accession>
<feature type="chain" id="PRO_0000124843" description="Probable prefoldin subunit 4">
    <location>
        <begin position="1"/>
        <end position="126"/>
    </location>
</feature>